<dbReference type="EMBL" id="U30821">
    <property type="protein sequence ID" value="AAA81257.1"/>
    <property type="molecule type" value="Genomic_DNA"/>
</dbReference>
<dbReference type="PIR" id="T06914">
    <property type="entry name" value="T06914"/>
</dbReference>
<dbReference type="RefSeq" id="NP_043226.1">
    <property type="nucleotide sequence ID" value="NC_001675.1"/>
</dbReference>
<dbReference type="SMR" id="P48086"/>
<dbReference type="GeneID" id="801655"/>
<dbReference type="GO" id="GO:0033115">
    <property type="term" value="C:cyanelle thylakoid membrane"/>
    <property type="evidence" value="ECO:0007669"/>
    <property type="project" value="UniProtKB-SubCell"/>
</dbReference>
<dbReference type="GO" id="GO:0005886">
    <property type="term" value="C:plasma membrane"/>
    <property type="evidence" value="ECO:0007669"/>
    <property type="project" value="UniProtKB-UniRule"/>
</dbReference>
<dbReference type="GO" id="GO:0045259">
    <property type="term" value="C:proton-transporting ATP synthase complex"/>
    <property type="evidence" value="ECO:0007669"/>
    <property type="project" value="UniProtKB-KW"/>
</dbReference>
<dbReference type="GO" id="GO:0033177">
    <property type="term" value="C:proton-transporting two-sector ATPase complex, proton-transporting domain"/>
    <property type="evidence" value="ECO:0007669"/>
    <property type="project" value="InterPro"/>
</dbReference>
<dbReference type="GO" id="GO:0008289">
    <property type="term" value="F:lipid binding"/>
    <property type="evidence" value="ECO:0007669"/>
    <property type="project" value="UniProtKB-KW"/>
</dbReference>
<dbReference type="GO" id="GO:0046933">
    <property type="term" value="F:proton-transporting ATP synthase activity, rotational mechanism"/>
    <property type="evidence" value="ECO:0007669"/>
    <property type="project" value="UniProtKB-UniRule"/>
</dbReference>
<dbReference type="CDD" id="cd18183">
    <property type="entry name" value="ATP-synt_Fo_c_ATPH"/>
    <property type="match status" value="1"/>
</dbReference>
<dbReference type="FunFam" id="1.20.20.10:FF:000001">
    <property type="entry name" value="ATP synthase subunit c, chloroplastic"/>
    <property type="match status" value="1"/>
</dbReference>
<dbReference type="Gene3D" id="1.20.20.10">
    <property type="entry name" value="F1F0 ATP synthase subunit C"/>
    <property type="match status" value="1"/>
</dbReference>
<dbReference type="HAMAP" id="MF_01396">
    <property type="entry name" value="ATP_synth_c_bact"/>
    <property type="match status" value="1"/>
</dbReference>
<dbReference type="InterPro" id="IPR005953">
    <property type="entry name" value="ATP_synth_csu_bac/chlpt"/>
</dbReference>
<dbReference type="InterPro" id="IPR000454">
    <property type="entry name" value="ATP_synth_F0_csu"/>
</dbReference>
<dbReference type="InterPro" id="IPR020537">
    <property type="entry name" value="ATP_synth_F0_csu_DDCD_BS"/>
</dbReference>
<dbReference type="InterPro" id="IPR038662">
    <property type="entry name" value="ATP_synth_F0_csu_sf"/>
</dbReference>
<dbReference type="InterPro" id="IPR002379">
    <property type="entry name" value="ATPase_proteolipid_c-like_dom"/>
</dbReference>
<dbReference type="InterPro" id="IPR035921">
    <property type="entry name" value="F/V-ATP_Csub_sf"/>
</dbReference>
<dbReference type="NCBIfam" id="TIGR01260">
    <property type="entry name" value="ATP_synt_c"/>
    <property type="match status" value="1"/>
</dbReference>
<dbReference type="NCBIfam" id="NF005608">
    <property type="entry name" value="PRK07354.1"/>
    <property type="match status" value="1"/>
</dbReference>
<dbReference type="PANTHER" id="PTHR10031">
    <property type="entry name" value="ATP SYNTHASE LIPID-BINDING PROTEIN, MITOCHONDRIAL"/>
    <property type="match status" value="1"/>
</dbReference>
<dbReference type="PANTHER" id="PTHR10031:SF0">
    <property type="entry name" value="ATPASE PROTEIN 9"/>
    <property type="match status" value="1"/>
</dbReference>
<dbReference type="Pfam" id="PF00137">
    <property type="entry name" value="ATP-synt_C"/>
    <property type="match status" value="1"/>
</dbReference>
<dbReference type="PRINTS" id="PR00124">
    <property type="entry name" value="ATPASEC"/>
</dbReference>
<dbReference type="SUPFAM" id="SSF81333">
    <property type="entry name" value="F1F0 ATP synthase subunit C"/>
    <property type="match status" value="1"/>
</dbReference>
<dbReference type="PROSITE" id="PS00605">
    <property type="entry name" value="ATPASE_C"/>
    <property type="match status" value="1"/>
</dbReference>
<keyword id="KW-0066">ATP synthesis</keyword>
<keyword id="KW-0138">CF(0)</keyword>
<keyword id="KW-0194">Cyanelle</keyword>
<keyword id="KW-0375">Hydrogen ion transport</keyword>
<keyword id="KW-0406">Ion transport</keyword>
<keyword id="KW-0446">Lipid-binding</keyword>
<keyword id="KW-0472">Membrane</keyword>
<keyword id="KW-0934">Plastid</keyword>
<keyword id="KW-0793">Thylakoid</keyword>
<keyword id="KW-0812">Transmembrane</keyword>
<keyword id="KW-1133">Transmembrane helix</keyword>
<keyword id="KW-0813">Transport</keyword>
<feature type="chain" id="PRO_0000112179" description="ATP synthase subunit C, cyanelle">
    <location>
        <begin position="1"/>
        <end position="81"/>
    </location>
</feature>
<feature type="transmembrane region" description="Helical" evidence="2">
    <location>
        <begin position="7"/>
        <end position="27"/>
    </location>
</feature>
<feature type="transmembrane region" description="Helical" evidence="2">
    <location>
        <begin position="57"/>
        <end position="77"/>
    </location>
</feature>
<feature type="site" description="Reversibly protonated during proton transport" evidence="2">
    <location>
        <position position="61"/>
    </location>
</feature>
<geneLocation type="cyanelle"/>
<organism>
    <name type="scientific">Cyanophora paradoxa</name>
    <dbReference type="NCBI Taxonomy" id="2762"/>
    <lineage>
        <taxon>Eukaryota</taxon>
        <taxon>Glaucocystophyceae</taxon>
        <taxon>Cyanophoraceae</taxon>
        <taxon>Cyanophora</taxon>
    </lineage>
</organism>
<gene>
    <name evidence="2" type="primary">atpE</name>
    <name evidence="2" type="synonym">atpH</name>
</gene>
<reference key="1">
    <citation type="journal article" date="1995" name="Plant Mol. Biol. Rep.">
        <title>Nucleotide sequence of the cyanelle DNA from Cyanophora paradoxa.</title>
        <authorList>
            <person name="Stirewalt V.L."/>
            <person name="Michalowski C.B."/>
            <person name="Loeffelhardt W."/>
            <person name="Bohnert H.J."/>
            <person name="Bryant D.A."/>
        </authorList>
    </citation>
    <scope>NUCLEOTIDE SEQUENCE [LARGE SCALE GENOMIC DNA]</scope>
    <source>
        <strain>UTEX LB 555 / Pringsheim</strain>
    </source>
</reference>
<reference key="2">
    <citation type="book" date="1997" name="Eukaryotism and symbiosis">
        <title>The complete sequence of the cyanelle genome of Cyanophora paradoxa: the genetic complexity of a primitive plastid.</title>
        <editorList>
            <person name="Schenk H.E.A."/>
            <person name="Herrmann R."/>
            <person name="Jeon K.W."/>
            <person name="Mueller N.E."/>
            <person name="Schwemmler W."/>
        </editorList>
        <authorList>
            <person name="Loeffelhardt W."/>
            <person name="Stirewalt V.L."/>
            <person name="Michalowski C.B."/>
            <person name="Annarella M."/>
            <person name="Farley J.Y."/>
            <person name="Schluchter W.M."/>
            <person name="Chung S."/>
            <person name="Newmann-Spallart C."/>
            <person name="Steiner J.M."/>
            <person name="Jakowitsch J."/>
            <person name="Bohnert H.J."/>
            <person name="Bryant D.A."/>
        </authorList>
    </citation>
    <scope>NUCLEOTIDE SEQUENCE [LARGE SCALE GENOMIC DNA]</scope>
    <source>
        <strain>UTEX LB 555 / Pringsheim</strain>
    </source>
</reference>
<accession>P48086</accession>
<comment type="function">
    <text evidence="2">F(1)F(0) ATP synthase produces ATP from ADP in the presence of a proton or sodium gradient. F-type ATPases consist of two structural domains, F(1) containing the extramembraneous catalytic core and F(0) containing the membrane proton channel, linked together by a central stalk and a peripheral stalk. During catalysis, ATP synthesis in the catalytic domain of F(1) is coupled via a rotary mechanism of the central stalk subunits to proton translocation.</text>
</comment>
<comment type="function">
    <text evidence="2">Key component of the F(0) channel; it plays a direct role in translocation across the membrane. A homomeric c-ring of between 10-14 subunits forms the central stalk rotor element with the F(1) delta and epsilon subunits.</text>
</comment>
<comment type="subunit">
    <text evidence="2">F-type ATPases have 2 components, F(1) - the catalytic core - and F(0) - the membrane proton channel. F(1) has five subunits: alpha(3), beta(3), gamma(1), delta(1), epsilon(1). F(0) has four main subunits: a(1), b(1), b'(1) and c(10-14). The alpha and beta chains form an alternating ring which encloses part of the gamma chain. F(1) is attached to F(0) by a central stalk formed by the gamma and epsilon chains, while a peripheral stalk is formed by the delta, b and b' chains.</text>
</comment>
<comment type="subcellular location">
    <subcellularLocation>
        <location evidence="1">Plastid</location>
        <location evidence="1">Cyanelle thylakoid membrane</location>
        <topology evidence="2">Multi-pass membrane protein</topology>
    </subcellularLocation>
</comment>
<comment type="similarity">
    <text evidence="2">Belongs to the ATPase C chain family.</text>
</comment>
<sequence length="81" mass="7965">MDATVSAASVIAAALAVGLAAIGPGIGQGTAAGQAVEGIARQPEVDGKIRGTLLLSLAFMEALTIYGLVVALALLFANPFV</sequence>
<evidence type="ECO:0000250" key="1"/>
<evidence type="ECO:0000255" key="2">
    <source>
        <dbReference type="HAMAP-Rule" id="MF_01396"/>
    </source>
</evidence>
<name>ATPH_CYAPA</name>
<protein>
    <recommendedName>
        <fullName>ATP synthase subunit C, cyanelle</fullName>
    </recommendedName>
    <alternativeName>
        <fullName>ATP synthase F0 sector subunit C</fullName>
    </alternativeName>
    <alternativeName>
        <fullName evidence="2">ATPase subunit III</fullName>
    </alternativeName>
    <alternativeName>
        <fullName evidence="2">Lipid-binding protein</fullName>
    </alternativeName>
</protein>
<proteinExistence type="inferred from homology"/>